<accession>Q4R9C9</accession>
<organism>
    <name type="scientific">Macaca fascicularis</name>
    <name type="common">Crab-eating macaque</name>
    <name type="synonym">Cynomolgus monkey</name>
    <dbReference type="NCBI Taxonomy" id="9541"/>
    <lineage>
        <taxon>Eukaryota</taxon>
        <taxon>Metazoa</taxon>
        <taxon>Chordata</taxon>
        <taxon>Craniata</taxon>
        <taxon>Vertebrata</taxon>
        <taxon>Euteleostomi</taxon>
        <taxon>Mammalia</taxon>
        <taxon>Eutheria</taxon>
        <taxon>Euarchontoglires</taxon>
        <taxon>Primates</taxon>
        <taxon>Haplorrhini</taxon>
        <taxon>Catarrhini</taxon>
        <taxon>Cercopithecidae</taxon>
        <taxon>Cercopithecinae</taxon>
        <taxon>Macaca</taxon>
    </lineage>
</organism>
<sequence>MFSFKVSRWMGLACFRSLVTSSPSIRQKKLMHKLQEEKAFREEMKIFREKIEDFREEMWTFRGKIRAFRGQILGFWEEERPFWEEEKSFWKEEKSFWEMEKSFREEEKTFWKKYRIFWKDDKAFWKEDNALWEKDRNLLQEDKALWEEEKALWVEERALLEEEKALWEDKTSLWEEENALWEEERAFWVESNGHIAREQMLEELHNANRGRRSLAFSRGRA</sequence>
<reference key="1">
    <citation type="submission" date="2005-06" db="EMBL/GenBank/DDBJ databases">
        <title>DNA sequences of macaque genes expressed in brain or testis and its evolutionary implications.</title>
        <authorList>
            <consortium name="International consortium for macaque cDNA sequencing and analysis"/>
        </authorList>
    </citation>
    <scope>NUCLEOTIDE SEQUENCE [LARGE SCALE MRNA]</scope>
    <source>
        <tissue>Testis</tissue>
    </source>
</reference>
<gene>
    <name type="primary">CCDC70</name>
    <name type="ORF">QtsA-10279</name>
</gene>
<name>CCD70_MACFA</name>
<evidence type="ECO:0000255" key="1"/>
<proteinExistence type="evidence at transcript level"/>
<keyword id="KW-0175">Coiled coil</keyword>
<keyword id="KW-1185">Reference proteome</keyword>
<keyword id="KW-0809">Transit peptide</keyword>
<protein>
    <recommendedName>
        <fullName>Coiled-coil domain-containing protein 70</fullName>
    </recommendedName>
</protein>
<feature type="chain" id="PRO_0000234433" description="Coiled-coil domain-containing protein 70">
    <location>
        <begin position="1"/>
        <end position="221"/>
    </location>
</feature>
<feature type="coiled-coil region" evidence="1">
    <location>
        <begin position="129"/>
        <end position="168"/>
    </location>
</feature>
<dbReference type="EMBL" id="AB168167">
    <property type="protein sequence ID" value="BAE00292.1"/>
    <property type="molecule type" value="mRNA"/>
</dbReference>
<dbReference type="RefSeq" id="NP_001271853.1">
    <property type="nucleotide sequence ID" value="NM_001284924.1"/>
</dbReference>
<dbReference type="SMR" id="Q4R9C9"/>
<dbReference type="eggNOG" id="ENOG502S3RY">
    <property type="taxonomic scope" value="Eukaryota"/>
</dbReference>
<dbReference type="Proteomes" id="UP000233100">
    <property type="component" value="Chromosome 17"/>
</dbReference>
<dbReference type="GO" id="GO:0005886">
    <property type="term" value="C:plasma membrane"/>
    <property type="evidence" value="ECO:0007669"/>
    <property type="project" value="Ensembl"/>
</dbReference>